<name>YSO2_ACIAM</name>
<accession>P29086</accession>
<keyword id="KW-1003">Cell membrane</keyword>
<keyword id="KW-0472">Membrane</keyword>
<keyword id="KW-0677">Repeat</keyword>
<keyword id="KW-0812">Transmembrane</keyword>
<keyword id="KW-1133">Transmembrane helix</keyword>
<keyword id="KW-0813">Transport</keyword>
<sequence length="253" mass="28283">MFFMALRFLIGGIILLPFAKQLTLNRDIFLLSIFTTLSTSFWAYGLLYVEPSESAVLSYTMPLIAIPLSTLILREKTTKTEVIGILIGFSGVVIYSLNLGIYFSLIGIVLTLINAFFWALFTVYFRKLRGFDATSVNAVQLLLGSLIFFTLSPIQFYFKYSINFLVDLLYVSVLGGGISFYLWNSMLKTERVSKVTVLSFSVPAVSTAVDELRGVNVNIGMIEGIGVMFLGILISRLEKKINKSNIINGRFHV</sequence>
<proteinExistence type="evidence at transcript level"/>
<reference key="1">
    <citation type="journal article" date="1992" name="J. Bacteriol.">
        <title>Molecular characterization of the sor gene, which encodes the sulfur oxygenase/reductase of the thermoacidophilic Archaeum Desulfurolobus ambivalens.</title>
        <authorList>
            <person name="Kletzin A."/>
        </authorList>
    </citation>
    <scope>NUCLEOTIDE SEQUENCE [GENOMIC DNA]</scope>
    <source>
        <strain>Lei 10 / DSM 3772 / JCM 9191</strain>
    </source>
</reference>
<dbReference type="EMBL" id="X56616">
    <property type="protein sequence ID" value="CAA39953.1"/>
    <property type="molecule type" value="Genomic_DNA"/>
</dbReference>
<dbReference type="PIR" id="C43331">
    <property type="entry name" value="C43331"/>
</dbReference>
<dbReference type="SMR" id="P29086"/>
<dbReference type="GO" id="GO:0005886">
    <property type="term" value="C:plasma membrane"/>
    <property type="evidence" value="ECO:0007669"/>
    <property type="project" value="UniProtKB-SubCell"/>
</dbReference>
<dbReference type="InterPro" id="IPR050638">
    <property type="entry name" value="AA-Vitamin_Transporters"/>
</dbReference>
<dbReference type="InterPro" id="IPR000620">
    <property type="entry name" value="EamA_dom"/>
</dbReference>
<dbReference type="PANTHER" id="PTHR32322">
    <property type="entry name" value="INNER MEMBRANE TRANSPORTER"/>
    <property type="match status" value="1"/>
</dbReference>
<dbReference type="PANTHER" id="PTHR32322:SF18">
    <property type="entry name" value="S-ADENOSYLMETHIONINE_S-ADENOSYLHOMOCYSTEINE TRANSPORTER"/>
    <property type="match status" value="1"/>
</dbReference>
<dbReference type="Pfam" id="PF00892">
    <property type="entry name" value="EamA"/>
    <property type="match status" value="2"/>
</dbReference>
<dbReference type="SUPFAM" id="SSF103481">
    <property type="entry name" value="Multidrug resistance efflux transporter EmrE"/>
    <property type="match status" value="1"/>
</dbReference>
<feature type="chain" id="PRO_0000108206" description="Uncharacterized transporter in sor 3'region">
    <location>
        <begin position="1"/>
        <end position="253"/>
    </location>
</feature>
<feature type="transmembrane region" description="Helical" evidence="1">
    <location>
        <begin position="2"/>
        <end position="22"/>
    </location>
</feature>
<feature type="transmembrane region" description="Helical" evidence="1">
    <location>
        <begin position="28"/>
        <end position="48"/>
    </location>
</feature>
<feature type="transmembrane region" description="Helical" evidence="1">
    <location>
        <begin position="53"/>
        <end position="73"/>
    </location>
</feature>
<feature type="transmembrane region" description="Helical" evidence="1">
    <location>
        <begin position="80"/>
        <end position="100"/>
    </location>
</feature>
<feature type="transmembrane region" description="Helical" evidence="1">
    <location>
        <begin position="101"/>
        <end position="121"/>
    </location>
</feature>
<feature type="transmembrane region" description="Helical" evidence="1">
    <location>
        <begin position="138"/>
        <end position="158"/>
    </location>
</feature>
<feature type="transmembrane region" description="Helical" evidence="1">
    <location>
        <begin position="162"/>
        <end position="182"/>
    </location>
</feature>
<feature type="transmembrane region" description="Helical" evidence="1">
    <location>
        <begin position="214"/>
        <end position="234"/>
    </location>
</feature>
<feature type="domain" description="EamA 1">
    <location>
        <begin position="1"/>
        <end position="97"/>
    </location>
</feature>
<feature type="domain" description="EamA 2">
    <location>
        <begin position="116"/>
        <end position="237"/>
    </location>
</feature>
<evidence type="ECO:0000255" key="1"/>
<evidence type="ECO:0000305" key="2"/>
<comment type="subcellular location">
    <subcellularLocation>
        <location evidence="2">Cell membrane</location>
        <topology evidence="2">Multi-pass membrane protein</topology>
    </subcellularLocation>
</comment>
<comment type="induction">
    <text>Aerobically and anaerobically induced.</text>
</comment>
<comment type="similarity">
    <text evidence="2">Belongs to the EamA transporter family.</text>
</comment>
<protein>
    <recommendedName>
        <fullName>Uncharacterized transporter in sor 3'region</fullName>
    </recommendedName>
    <alternativeName>
        <fullName>ORF2</fullName>
    </alternativeName>
</protein>
<organism>
    <name type="scientific">Acidianus ambivalens</name>
    <name type="common">Desulfurolobus ambivalens</name>
    <dbReference type="NCBI Taxonomy" id="2283"/>
    <lineage>
        <taxon>Archaea</taxon>
        <taxon>Thermoproteota</taxon>
        <taxon>Thermoprotei</taxon>
        <taxon>Sulfolobales</taxon>
        <taxon>Sulfolobaceae</taxon>
        <taxon>Acidianus</taxon>
    </lineage>
</organism>